<proteinExistence type="predicted"/>
<organism>
    <name type="scientific">Treponema pallidum (strain Nichols)</name>
    <dbReference type="NCBI Taxonomy" id="243276"/>
    <lineage>
        <taxon>Bacteria</taxon>
        <taxon>Pseudomonadati</taxon>
        <taxon>Spirochaetota</taxon>
        <taxon>Spirochaetia</taxon>
        <taxon>Spirochaetales</taxon>
        <taxon>Treponemataceae</taxon>
        <taxon>Treponema</taxon>
    </lineage>
</organism>
<accession>O83308</accession>
<sequence>MRADKGAVGTVAVVCAFDLSDYAFVPLCGTREQSCMKAVPGFVPCVEVRGCESTAGVGRRCAFERAVTAAYALPGCHQVCVYADAASAAKVARFMQCATPIFPSLRVNVLDDMRVSAFFAHVARVCAEYAQLGEEPEAVFVLRADAPFIDSVASAQLYAQHREYLAEYSFADGYPEGLFAAVVAPGLFPILATLTQDAHICFALRSFLRALKQTLILLI</sequence>
<dbReference type="EMBL" id="AE000520">
    <property type="protein sequence ID" value="AAC65280.1"/>
    <property type="molecule type" value="Genomic_DNA"/>
</dbReference>
<dbReference type="PIR" id="G71343">
    <property type="entry name" value="G71343"/>
</dbReference>
<dbReference type="RefSeq" id="WP_010881733.1">
    <property type="nucleotide sequence ID" value="NC_000919.1"/>
</dbReference>
<dbReference type="IntAct" id="O83308">
    <property type="interactions" value="8"/>
</dbReference>
<dbReference type="STRING" id="243276.TP_0284"/>
<dbReference type="EnsemblBacteria" id="AAC65280">
    <property type="protein sequence ID" value="AAC65280"/>
    <property type="gene ID" value="TP_0284"/>
</dbReference>
<dbReference type="KEGG" id="tpa:TP_0284"/>
<dbReference type="HOGENOM" id="CLU_1260991_0_0_12"/>
<dbReference type="Proteomes" id="UP000000811">
    <property type="component" value="Chromosome"/>
</dbReference>
<protein>
    <recommendedName>
        <fullName>Uncharacterized protein TP_0284</fullName>
    </recommendedName>
</protein>
<gene>
    <name type="ordered locus">TP_0284</name>
</gene>
<name>Y284_TREPA</name>
<reference key="1">
    <citation type="journal article" date="1998" name="Science">
        <title>Complete genome sequence of Treponema pallidum, the syphilis spirochete.</title>
        <authorList>
            <person name="Fraser C.M."/>
            <person name="Norris S.J."/>
            <person name="Weinstock G.M."/>
            <person name="White O."/>
            <person name="Sutton G.G."/>
            <person name="Dodson R.J."/>
            <person name="Gwinn M.L."/>
            <person name="Hickey E.K."/>
            <person name="Clayton R.A."/>
            <person name="Ketchum K.A."/>
            <person name="Sodergren E."/>
            <person name="Hardham J.M."/>
            <person name="McLeod M.P."/>
            <person name="Salzberg S.L."/>
            <person name="Peterson J.D."/>
            <person name="Khalak H.G."/>
            <person name="Richardson D.L."/>
            <person name="Howell J.K."/>
            <person name="Chidambaram M."/>
            <person name="Utterback T.R."/>
            <person name="McDonald L.A."/>
            <person name="Artiach P."/>
            <person name="Bowman C."/>
            <person name="Cotton M.D."/>
            <person name="Fujii C."/>
            <person name="Garland S.A."/>
            <person name="Hatch B."/>
            <person name="Horst K."/>
            <person name="Roberts K.M."/>
            <person name="Sandusky M."/>
            <person name="Weidman J.F."/>
            <person name="Smith H.O."/>
            <person name="Venter J.C."/>
        </authorList>
    </citation>
    <scope>NUCLEOTIDE SEQUENCE [LARGE SCALE GENOMIC DNA]</scope>
    <source>
        <strain>Nichols</strain>
    </source>
</reference>
<keyword id="KW-1185">Reference proteome</keyword>
<feature type="chain" id="PRO_0000202226" description="Uncharacterized protein TP_0284">
    <location>
        <begin position="1"/>
        <end position="219"/>
    </location>
</feature>